<organism>
    <name type="scientific">Mycolicibacterium smegmatis (strain ATCC 700084 / mc(2)155)</name>
    <name type="common">Mycobacterium smegmatis</name>
    <dbReference type="NCBI Taxonomy" id="246196"/>
    <lineage>
        <taxon>Bacteria</taxon>
        <taxon>Bacillati</taxon>
        <taxon>Actinomycetota</taxon>
        <taxon>Actinomycetes</taxon>
        <taxon>Mycobacteriales</taxon>
        <taxon>Mycobacteriaceae</taxon>
        <taxon>Mycolicibacterium</taxon>
    </lineage>
</organism>
<evidence type="ECO:0000255" key="1">
    <source>
        <dbReference type="HAMAP-Rule" id="MF_00300"/>
    </source>
</evidence>
<evidence type="ECO:0000305" key="2"/>
<gene>
    <name evidence="1" type="primary">aroC</name>
    <name type="ordered locus">MSMEG_3030</name>
    <name type="ordered locus">MSMEI_2955</name>
</gene>
<feature type="chain" id="PRO_0000322410" description="Chorismate synthase">
    <location>
        <begin position="1"/>
        <end position="399"/>
    </location>
</feature>
<feature type="binding site" evidence="1">
    <location>
        <position position="40"/>
    </location>
    <ligand>
        <name>NADP(+)</name>
        <dbReference type="ChEBI" id="CHEBI:58349"/>
    </ligand>
</feature>
<feature type="binding site" evidence="1">
    <location>
        <position position="46"/>
    </location>
    <ligand>
        <name>NADP(+)</name>
        <dbReference type="ChEBI" id="CHEBI:58349"/>
    </ligand>
</feature>
<feature type="binding site" evidence="1">
    <location>
        <begin position="134"/>
        <end position="136"/>
    </location>
    <ligand>
        <name>FMN</name>
        <dbReference type="ChEBI" id="CHEBI:58210"/>
    </ligand>
</feature>
<feature type="binding site" evidence="1">
    <location>
        <begin position="255"/>
        <end position="256"/>
    </location>
    <ligand>
        <name>FMN</name>
        <dbReference type="ChEBI" id="CHEBI:58210"/>
    </ligand>
</feature>
<feature type="binding site" evidence="1">
    <location>
        <position position="299"/>
    </location>
    <ligand>
        <name>FMN</name>
        <dbReference type="ChEBI" id="CHEBI:58210"/>
    </ligand>
</feature>
<feature type="binding site" evidence="1">
    <location>
        <begin position="314"/>
        <end position="318"/>
    </location>
    <ligand>
        <name>FMN</name>
        <dbReference type="ChEBI" id="CHEBI:58210"/>
    </ligand>
</feature>
<feature type="binding site" evidence="1">
    <location>
        <position position="340"/>
    </location>
    <ligand>
        <name>FMN</name>
        <dbReference type="ChEBI" id="CHEBI:58210"/>
    </ligand>
</feature>
<comment type="function">
    <text evidence="1">Catalyzes the anti-1,4-elimination of the C-3 phosphate and the C-6 proR hydrogen from 5-enolpyruvylshikimate-3-phosphate (EPSP) to yield chorismate, which is the branch point compound that serves as the starting substrate for the three terminal pathways of aromatic amino acid biosynthesis. This reaction introduces a second double bond into the aromatic ring system.</text>
</comment>
<comment type="catalytic activity">
    <reaction evidence="1">
        <text>5-O-(1-carboxyvinyl)-3-phosphoshikimate = chorismate + phosphate</text>
        <dbReference type="Rhea" id="RHEA:21020"/>
        <dbReference type="ChEBI" id="CHEBI:29748"/>
        <dbReference type="ChEBI" id="CHEBI:43474"/>
        <dbReference type="ChEBI" id="CHEBI:57701"/>
        <dbReference type="EC" id="4.2.3.5"/>
    </reaction>
</comment>
<comment type="cofactor">
    <cofactor evidence="1">
        <name>FMNH2</name>
        <dbReference type="ChEBI" id="CHEBI:57618"/>
    </cofactor>
    <text evidence="1">Reduced FMN (FMNH(2)).</text>
</comment>
<comment type="pathway">
    <text evidence="1">Metabolic intermediate biosynthesis; chorismate biosynthesis; chorismate from D-erythrose 4-phosphate and phosphoenolpyruvate: step 7/7.</text>
</comment>
<comment type="subunit">
    <text evidence="1">Homotetramer.</text>
</comment>
<comment type="similarity">
    <text evidence="1">Belongs to the chorismate synthase family.</text>
</comment>
<comment type="sequence caution" evidence="2">
    <conflict type="erroneous initiation">
        <sequence resource="EMBL-CDS" id="AFP39419"/>
    </conflict>
    <text>Extended N-terminus.</text>
</comment>
<accession>A0QWQ9</accession>
<accession>I7GAB0</accession>
<protein>
    <recommendedName>
        <fullName evidence="1">Chorismate synthase</fullName>
        <shortName evidence="1">CS</shortName>
        <ecNumber evidence="1">4.2.3.5</ecNumber>
    </recommendedName>
    <alternativeName>
        <fullName evidence="1">5-enolpyruvylshikimate-3-phosphate phospholyase</fullName>
    </alternativeName>
</protein>
<keyword id="KW-0028">Amino-acid biosynthesis</keyword>
<keyword id="KW-0057">Aromatic amino acid biosynthesis</keyword>
<keyword id="KW-0274">FAD</keyword>
<keyword id="KW-0285">Flavoprotein</keyword>
<keyword id="KW-0288">FMN</keyword>
<keyword id="KW-0456">Lyase</keyword>
<keyword id="KW-0521">NADP</keyword>
<keyword id="KW-1185">Reference proteome</keyword>
<sequence>MLRWTTAGESHGRALVAMLEGMVAGVPITSEEIGAQLKRRRLGYGRGARMKFEQDQVTMLAGVRHGLTLGGPIAIEIGNTEWPKWESVMSPDPVDPADLDVARNAPLTRPRPGHADYAGMLKYGFDDARPVLERASARETAARVAAGTVARAFLREALGVEVLSHVISIGASKPYDGPAPQFSDLSAIDDSPVRAFDKASEELMIAEIEAAKRDGDTLGGVVEVVADGLPVGLGSFTSGENRLDSQLAAAVMGIQAIKGVEIGDGFETARRRGSVAHDEMYPGPDGVVRSTNRAGGLEGGMTNGQPLRVRAAMKPISTVPRALATVDMTSGEEAVAIHQRSDVCAVPAAGVVVETMVALVLARAALEKFGGDSLAETRANIDSYLRAVAEREPAAQASS</sequence>
<dbReference type="EC" id="4.2.3.5" evidence="1"/>
<dbReference type="EMBL" id="CP000480">
    <property type="protein sequence ID" value="ABK72490.1"/>
    <property type="molecule type" value="Genomic_DNA"/>
</dbReference>
<dbReference type="EMBL" id="CP001663">
    <property type="protein sequence ID" value="AFP39419.1"/>
    <property type="status" value="ALT_INIT"/>
    <property type="molecule type" value="Genomic_DNA"/>
</dbReference>
<dbReference type="RefSeq" id="WP_003894412.1">
    <property type="nucleotide sequence ID" value="NZ_SIJM01000002.1"/>
</dbReference>
<dbReference type="RefSeq" id="YP_887347.1">
    <property type="nucleotide sequence ID" value="NC_008596.1"/>
</dbReference>
<dbReference type="SMR" id="A0QWQ9"/>
<dbReference type="STRING" id="246196.MSMEG_3030"/>
<dbReference type="PaxDb" id="246196-MSMEI_2955"/>
<dbReference type="GeneID" id="93457809"/>
<dbReference type="KEGG" id="msb:LJ00_15080"/>
<dbReference type="KEGG" id="msg:MSMEI_2955"/>
<dbReference type="KEGG" id="msm:MSMEG_3030"/>
<dbReference type="PATRIC" id="fig|246196.19.peg.2992"/>
<dbReference type="eggNOG" id="COG0082">
    <property type="taxonomic scope" value="Bacteria"/>
</dbReference>
<dbReference type="OrthoDB" id="9771806at2"/>
<dbReference type="UniPathway" id="UPA00053">
    <property type="reaction ID" value="UER00090"/>
</dbReference>
<dbReference type="Proteomes" id="UP000000757">
    <property type="component" value="Chromosome"/>
</dbReference>
<dbReference type="Proteomes" id="UP000006158">
    <property type="component" value="Chromosome"/>
</dbReference>
<dbReference type="GO" id="GO:0005829">
    <property type="term" value="C:cytosol"/>
    <property type="evidence" value="ECO:0007669"/>
    <property type="project" value="TreeGrafter"/>
</dbReference>
<dbReference type="GO" id="GO:0004107">
    <property type="term" value="F:chorismate synthase activity"/>
    <property type="evidence" value="ECO:0007669"/>
    <property type="project" value="UniProtKB-UniRule"/>
</dbReference>
<dbReference type="GO" id="GO:0010181">
    <property type="term" value="F:FMN binding"/>
    <property type="evidence" value="ECO:0007669"/>
    <property type="project" value="TreeGrafter"/>
</dbReference>
<dbReference type="GO" id="GO:0008652">
    <property type="term" value="P:amino acid biosynthetic process"/>
    <property type="evidence" value="ECO:0007669"/>
    <property type="project" value="UniProtKB-KW"/>
</dbReference>
<dbReference type="GO" id="GO:0009073">
    <property type="term" value="P:aromatic amino acid family biosynthetic process"/>
    <property type="evidence" value="ECO:0007669"/>
    <property type="project" value="UniProtKB-KW"/>
</dbReference>
<dbReference type="GO" id="GO:0009423">
    <property type="term" value="P:chorismate biosynthetic process"/>
    <property type="evidence" value="ECO:0007669"/>
    <property type="project" value="UniProtKB-UniRule"/>
</dbReference>
<dbReference type="CDD" id="cd07304">
    <property type="entry name" value="Chorismate_synthase"/>
    <property type="match status" value="1"/>
</dbReference>
<dbReference type="FunFam" id="3.60.150.10:FF:000002">
    <property type="entry name" value="Chorismate synthase"/>
    <property type="match status" value="1"/>
</dbReference>
<dbReference type="Gene3D" id="3.60.150.10">
    <property type="entry name" value="Chorismate synthase AroC"/>
    <property type="match status" value="1"/>
</dbReference>
<dbReference type="HAMAP" id="MF_00300">
    <property type="entry name" value="Chorismate_synth"/>
    <property type="match status" value="1"/>
</dbReference>
<dbReference type="InterPro" id="IPR000453">
    <property type="entry name" value="Chorismate_synth"/>
</dbReference>
<dbReference type="InterPro" id="IPR035904">
    <property type="entry name" value="Chorismate_synth_AroC_sf"/>
</dbReference>
<dbReference type="InterPro" id="IPR020541">
    <property type="entry name" value="Chorismate_synthase_CS"/>
</dbReference>
<dbReference type="NCBIfam" id="TIGR00033">
    <property type="entry name" value="aroC"/>
    <property type="match status" value="1"/>
</dbReference>
<dbReference type="NCBIfam" id="NF003793">
    <property type="entry name" value="PRK05382.1"/>
    <property type="match status" value="1"/>
</dbReference>
<dbReference type="PANTHER" id="PTHR21085">
    <property type="entry name" value="CHORISMATE SYNTHASE"/>
    <property type="match status" value="1"/>
</dbReference>
<dbReference type="PANTHER" id="PTHR21085:SF0">
    <property type="entry name" value="CHORISMATE SYNTHASE"/>
    <property type="match status" value="1"/>
</dbReference>
<dbReference type="Pfam" id="PF01264">
    <property type="entry name" value="Chorismate_synt"/>
    <property type="match status" value="1"/>
</dbReference>
<dbReference type="PIRSF" id="PIRSF001456">
    <property type="entry name" value="Chorismate_synth"/>
    <property type="match status" value="1"/>
</dbReference>
<dbReference type="SUPFAM" id="SSF103263">
    <property type="entry name" value="Chorismate synthase, AroC"/>
    <property type="match status" value="1"/>
</dbReference>
<dbReference type="PROSITE" id="PS00787">
    <property type="entry name" value="CHORISMATE_SYNTHASE_1"/>
    <property type="match status" value="1"/>
</dbReference>
<dbReference type="PROSITE" id="PS00788">
    <property type="entry name" value="CHORISMATE_SYNTHASE_2"/>
    <property type="match status" value="1"/>
</dbReference>
<dbReference type="PROSITE" id="PS00789">
    <property type="entry name" value="CHORISMATE_SYNTHASE_3"/>
    <property type="match status" value="1"/>
</dbReference>
<reference key="1">
    <citation type="submission" date="2006-10" db="EMBL/GenBank/DDBJ databases">
        <authorList>
            <person name="Fleischmann R.D."/>
            <person name="Dodson R.J."/>
            <person name="Haft D.H."/>
            <person name="Merkel J.S."/>
            <person name="Nelson W.C."/>
            <person name="Fraser C.M."/>
        </authorList>
    </citation>
    <scope>NUCLEOTIDE SEQUENCE [LARGE SCALE GENOMIC DNA]</scope>
    <source>
        <strain>ATCC 700084 / mc(2)155</strain>
    </source>
</reference>
<reference key="2">
    <citation type="journal article" date="2007" name="Genome Biol.">
        <title>Interrupted coding sequences in Mycobacterium smegmatis: authentic mutations or sequencing errors?</title>
        <authorList>
            <person name="Deshayes C."/>
            <person name="Perrodou E."/>
            <person name="Gallien S."/>
            <person name="Euphrasie D."/>
            <person name="Schaeffer C."/>
            <person name="Van-Dorsselaer A."/>
            <person name="Poch O."/>
            <person name="Lecompte O."/>
            <person name="Reyrat J.-M."/>
        </authorList>
    </citation>
    <scope>NUCLEOTIDE SEQUENCE [LARGE SCALE GENOMIC DNA]</scope>
    <source>
        <strain>ATCC 700084 / mc(2)155</strain>
    </source>
</reference>
<reference key="3">
    <citation type="journal article" date="2009" name="Genome Res.">
        <title>Ortho-proteogenomics: multiple proteomes investigation through orthology and a new MS-based protocol.</title>
        <authorList>
            <person name="Gallien S."/>
            <person name="Perrodou E."/>
            <person name="Carapito C."/>
            <person name="Deshayes C."/>
            <person name="Reyrat J.-M."/>
            <person name="Van Dorsselaer A."/>
            <person name="Poch O."/>
            <person name="Schaeffer C."/>
            <person name="Lecompte O."/>
        </authorList>
    </citation>
    <scope>NUCLEOTIDE SEQUENCE [LARGE SCALE GENOMIC DNA]</scope>
    <source>
        <strain>ATCC 700084 / mc(2)155</strain>
    </source>
</reference>
<proteinExistence type="inferred from homology"/>
<name>AROC_MYCS2</name>